<dbReference type="EC" id="2.3.1.23" evidence="7 8"/>
<dbReference type="EC" id="2.3.1.51" evidence="2"/>
<dbReference type="EC" id="2.3.1.25" evidence="7"/>
<dbReference type="EC" id="2.3.1.67" evidence="7 9"/>
<dbReference type="EMBL" id="AB244716">
    <property type="protein sequence ID" value="BAF47695.1"/>
    <property type="molecule type" value="mRNA"/>
</dbReference>
<dbReference type="EMBL" id="AK039431">
    <property type="protein sequence ID" value="BAC30345.1"/>
    <property type="molecule type" value="mRNA"/>
</dbReference>
<dbReference type="EMBL" id="EF442783">
    <property type="protein sequence ID" value="ABR20912.1"/>
    <property type="molecule type" value="mRNA"/>
</dbReference>
<dbReference type="EMBL" id="EF442784">
    <property type="protein sequence ID" value="ABR20913.1"/>
    <property type="molecule type" value="mRNA"/>
</dbReference>
<dbReference type="CCDS" id="CCDS22524.1">
    <molecule id="Q8BYI6-1"/>
</dbReference>
<dbReference type="CCDS" id="CCDS90434.1">
    <molecule id="Q8BYI6-2"/>
</dbReference>
<dbReference type="RefSeq" id="NP_001344303.1">
    <molecule id="Q8BYI6-2"/>
    <property type="nucleotide sequence ID" value="NM_001357374.1"/>
</dbReference>
<dbReference type="RefSeq" id="NP_766602.1">
    <molecule id="Q8BYI6-1"/>
    <property type="nucleotide sequence ID" value="NM_173014.2"/>
</dbReference>
<dbReference type="SMR" id="Q8BYI6"/>
<dbReference type="BioGRID" id="234756">
    <property type="interactions" value="2"/>
</dbReference>
<dbReference type="FunCoup" id="Q8BYI6">
    <property type="interactions" value="1415"/>
</dbReference>
<dbReference type="STRING" id="10090.ENSMUSP00000049252"/>
<dbReference type="SwissLipids" id="SLP:000000293"/>
<dbReference type="iPTMnet" id="Q8BYI6"/>
<dbReference type="PhosphoSitePlus" id="Q8BYI6"/>
<dbReference type="SwissPalm" id="Q8BYI6"/>
<dbReference type="PaxDb" id="10090-ENSMUSP00000049252"/>
<dbReference type="PeptideAtlas" id="Q8BYI6"/>
<dbReference type="ProteomicsDB" id="287796">
    <molecule id="Q8BYI6-1"/>
</dbReference>
<dbReference type="ProteomicsDB" id="287797">
    <molecule id="Q8BYI6-2"/>
</dbReference>
<dbReference type="ProteomicsDB" id="287798">
    <molecule id="Q8BYI6-3"/>
</dbReference>
<dbReference type="Antibodypedia" id="2010">
    <property type="antibodies" value="191 antibodies from 28 providers"/>
</dbReference>
<dbReference type="DNASU" id="270084"/>
<dbReference type="Ensembl" id="ENSMUST00000046290.3">
    <molecule id="Q8BYI6-1"/>
    <property type="protein sequence ID" value="ENSMUSP00000049252.2"/>
    <property type="gene ID" value="ENSMUSG00000033192.6"/>
</dbReference>
<dbReference type="Ensembl" id="ENSMUST00000209265.2">
    <molecule id="Q8BYI6-3"/>
    <property type="protein sequence ID" value="ENSMUSP00000148089.2"/>
    <property type="gene ID" value="ENSMUSG00000033192.6"/>
</dbReference>
<dbReference type="Ensembl" id="ENSMUST00000210099.2">
    <molecule id="Q8BYI6-2"/>
    <property type="protein sequence ID" value="ENSMUSP00000147941.2"/>
    <property type="gene ID" value="ENSMUSG00000033192.6"/>
</dbReference>
<dbReference type="GeneID" id="270084"/>
<dbReference type="KEGG" id="mmu:270084"/>
<dbReference type="UCSC" id="uc009muf.1">
    <molecule id="Q8BYI6-3"/>
    <property type="organism name" value="mouse"/>
</dbReference>
<dbReference type="UCSC" id="uc009mug.1">
    <molecule id="Q8BYI6-1"/>
    <property type="organism name" value="mouse"/>
</dbReference>
<dbReference type="UCSC" id="uc012gij.1">
    <molecule id="Q8BYI6-2"/>
    <property type="organism name" value="mouse"/>
</dbReference>
<dbReference type="AGR" id="MGI:3606214"/>
<dbReference type="CTD" id="54947"/>
<dbReference type="MGI" id="MGI:3606214">
    <property type="gene designation" value="Lpcat2"/>
</dbReference>
<dbReference type="VEuPathDB" id="HostDB:ENSMUSG00000033192"/>
<dbReference type="eggNOG" id="KOG4666">
    <property type="taxonomic scope" value="Eukaryota"/>
</dbReference>
<dbReference type="GeneTree" id="ENSGT01030000234574"/>
<dbReference type="HOGENOM" id="CLU_025017_0_0_1"/>
<dbReference type="InParanoid" id="Q8BYI6"/>
<dbReference type="OMA" id="FLYHKSE"/>
<dbReference type="OrthoDB" id="272512at2759"/>
<dbReference type="PhylomeDB" id="Q8BYI6"/>
<dbReference type="TreeFam" id="TF323244"/>
<dbReference type="BRENDA" id="2.3.1.23">
    <property type="organism ID" value="3474"/>
</dbReference>
<dbReference type="BRENDA" id="2.3.1.67">
    <property type="organism ID" value="3474"/>
</dbReference>
<dbReference type="Reactome" id="R-MMU-1482788">
    <property type="pathway name" value="Acyl chain remodelling of PC"/>
</dbReference>
<dbReference type="UniPathway" id="UPA00085"/>
<dbReference type="BioGRID-ORCS" id="270084">
    <property type="hits" value="4 hits in 81 CRISPR screens"/>
</dbReference>
<dbReference type="ChiTaRS" id="Lpcat2">
    <property type="organism name" value="mouse"/>
</dbReference>
<dbReference type="PRO" id="PR:Q8BYI6"/>
<dbReference type="Proteomes" id="UP000000589">
    <property type="component" value="Chromosome 8"/>
</dbReference>
<dbReference type="RNAct" id="Q8BYI6">
    <property type="molecule type" value="protein"/>
</dbReference>
<dbReference type="Bgee" id="ENSMUSG00000033192">
    <property type="expression patterns" value="Expressed in granulocyte and 158 other cell types or tissues"/>
</dbReference>
<dbReference type="GO" id="GO:0005783">
    <property type="term" value="C:endoplasmic reticulum"/>
    <property type="evidence" value="ECO:0000314"/>
    <property type="project" value="UniProtKB"/>
</dbReference>
<dbReference type="GO" id="GO:0005789">
    <property type="term" value="C:endoplasmic reticulum membrane"/>
    <property type="evidence" value="ECO:0000250"/>
    <property type="project" value="UniProtKB"/>
</dbReference>
<dbReference type="GO" id="GO:0000139">
    <property type="term" value="C:Golgi membrane"/>
    <property type="evidence" value="ECO:0007669"/>
    <property type="project" value="UniProtKB-SubCell"/>
</dbReference>
<dbReference type="GO" id="GO:0005795">
    <property type="term" value="C:Golgi stack"/>
    <property type="evidence" value="ECO:0000314"/>
    <property type="project" value="UniProtKB"/>
</dbReference>
<dbReference type="GO" id="GO:0005811">
    <property type="term" value="C:lipid droplet"/>
    <property type="evidence" value="ECO:0007669"/>
    <property type="project" value="UniProtKB-SubCell"/>
</dbReference>
<dbReference type="GO" id="GO:0016020">
    <property type="term" value="C:membrane"/>
    <property type="evidence" value="ECO:0000314"/>
    <property type="project" value="UniProtKB"/>
</dbReference>
<dbReference type="GO" id="GO:0005886">
    <property type="term" value="C:plasma membrane"/>
    <property type="evidence" value="ECO:0007669"/>
    <property type="project" value="UniProtKB-SubCell"/>
</dbReference>
<dbReference type="GO" id="GO:0003841">
    <property type="term" value="F:1-acylglycerol-3-phosphate O-acyltransferase activity"/>
    <property type="evidence" value="ECO:0000250"/>
    <property type="project" value="UniProtKB"/>
</dbReference>
<dbReference type="GO" id="GO:0047184">
    <property type="term" value="F:1-acylglycerophosphocholine O-acyltransferase activity"/>
    <property type="evidence" value="ECO:0000314"/>
    <property type="project" value="UniProtKB"/>
</dbReference>
<dbReference type="GO" id="GO:0047192">
    <property type="term" value="F:1-alkylglycerophosphocholine O-acetyltransferase activity"/>
    <property type="evidence" value="ECO:0000314"/>
    <property type="project" value="UniProtKB"/>
</dbReference>
<dbReference type="GO" id="GO:0005509">
    <property type="term" value="F:calcium ion binding"/>
    <property type="evidence" value="ECO:0007669"/>
    <property type="project" value="InterPro"/>
</dbReference>
<dbReference type="GO" id="GO:0047159">
    <property type="term" value="F:plasmalogen synthase activity"/>
    <property type="evidence" value="ECO:0007669"/>
    <property type="project" value="UniProtKB-EC"/>
</dbReference>
<dbReference type="GO" id="GO:0061024">
    <property type="term" value="P:membrane organization"/>
    <property type="evidence" value="ECO:0000314"/>
    <property type="project" value="UniProtKB"/>
</dbReference>
<dbReference type="GO" id="GO:0036151">
    <property type="term" value="P:phosphatidylcholine acyl-chain remodeling"/>
    <property type="evidence" value="ECO:0007669"/>
    <property type="project" value="Ensembl"/>
</dbReference>
<dbReference type="GO" id="GO:0006663">
    <property type="term" value="P:platelet activating factor biosynthetic process"/>
    <property type="evidence" value="ECO:0000314"/>
    <property type="project" value="UniProtKB"/>
</dbReference>
<dbReference type="CDD" id="cd00051">
    <property type="entry name" value="EFh"/>
    <property type="match status" value="1"/>
</dbReference>
<dbReference type="CDD" id="cd07991">
    <property type="entry name" value="LPLAT_LPCAT1-like"/>
    <property type="match status" value="1"/>
</dbReference>
<dbReference type="FunFam" id="1.10.238.10:FF:000160">
    <property type="entry name" value="Lysophosphatidylcholine acyltransferase 2"/>
    <property type="match status" value="1"/>
</dbReference>
<dbReference type="Gene3D" id="1.10.238.10">
    <property type="entry name" value="EF-hand"/>
    <property type="match status" value="1"/>
</dbReference>
<dbReference type="InterPro" id="IPR011992">
    <property type="entry name" value="EF-hand-dom_pair"/>
</dbReference>
<dbReference type="InterPro" id="IPR018247">
    <property type="entry name" value="EF_Hand_1_Ca_BS"/>
</dbReference>
<dbReference type="InterPro" id="IPR002048">
    <property type="entry name" value="EF_hand_dom"/>
</dbReference>
<dbReference type="InterPro" id="IPR045252">
    <property type="entry name" value="LPCAT1-like"/>
</dbReference>
<dbReference type="InterPro" id="IPR002123">
    <property type="entry name" value="Plipid/glycerol_acylTrfase"/>
</dbReference>
<dbReference type="PANTHER" id="PTHR23063:SF21">
    <property type="entry name" value="LYSOPHOSPHATIDYLCHOLINE ACYLTRANSFERASE 2"/>
    <property type="match status" value="1"/>
</dbReference>
<dbReference type="PANTHER" id="PTHR23063">
    <property type="entry name" value="PHOSPHOLIPID ACYLTRANSFERASE"/>
    <property type="match status" value="1"/>
</dbReference>
<dbReference type="Pfam" id="PF01553">
    <property type="entry name" value="Acyltransferase"/>
    <property type="match status" value="1"/>
</dbReference>
<dbReference type="Pfam" id="PF13499">
    <property type="entry name" value="EF-hand_7"/>
    <property type="match status" value="1"/>
</dbReference>
<dbReference type="PRINTS" id="PR00450">
    <property type="entry name" value="RECOVERIN"/>
</dbReference>
<dbReference type="SMART" id="SM00054">
    <property type="entry name" value="EFh"/>
    <property type="match status" value="2"/>
</dbReference>
<dbReference type="SMART" id="SM00563">
    <property type="entry name" value="PlsC"/>
    <property type="match status" value="1"/>
</dbReference>
<dbReference type="SUPFAM" id="SSF47473">
    <property type="entry name" value="EF-hand"/>
    <property type="match status" value="1"/>
</dbReference>
<dbReference type="SUPFAM" id="SSF69593">
    <property type="entry name" value="Glycerol-3-phosphate (1)-acyltransferase"/>
    <property type="match status" value="1"/>
</dbReference>
<dbReference type="PROSITE" id="PS00018">
    <property type="entry name" value="EF_HAND_1"/>
    <property type="match status" value="2"/>
</dbReference>
<dbReference type="PROSITE" id="PS50222">
    <property type="entry name" value="EF_HAND_2"/>
    <property type="match status" value="2"/>
</dbReference>
<protein>
    <recommendedName>
        <fullName>Lysophosphatidylcholine acyltransferase 2</fullName>
        <shortName>LPC acyltransferase 2</shortName>
        <shortName>LPCAT-2</shortName>
        <shortName>LysoPC acyltransferase 2</shortName>
        <ecNumber evidence="7 8">2.3.1.23</ecNumber>
    </recommendedName>
    <alternativeName>
        <fullName>1-acylglycerol-3-phosphate O-acyltransferase 11</fullName>
        <shortName>1-AGP acyltransferase 11</shortName>
        <shortName>1-AGPAT 11</shortName>
        <ecNumber evidence="2">2.3.1.51</ecNumber>
    </alternativeName>
    <alternativeName>
        <fullName>1-acylglycerophosphocholine O-acyltransferase</fullName>
    </alternativeName>
    <alternativeName>
        <fullName>1-alkenylglycerophosphocholine O-acyltransferase</fullName>
        <ecNumber evidence="7">2.3.1.25</ecNumber>
    </alternativeName>
    <alternativeName>
        <fullName>1-alkylglycerophosphocholine O-acetyltransferase</fullName>
        <ecNumber evidence="7 9">2.3.1.67</ecNumber>
    </alternativeName>
    <alternativeName>
        <fullName>Acetyl-CoA:lyso-platelet-activating factor acetyltransferase</fullName>
        <shortName>Acetyl-CoA:lyso-PAF acetyltransferase</shortName>
        <shortName>Lyso-PAF acetyltransferase</shortName>
        <shortName>LysoPAFAT</shortName>
    </alternativeName>
    <alternativeName>
        <fullName>Acyltransferase-like 1</fullName>
    </alternativeName>
</protein>
<name>PCAT2_MOUSE</name>
<proteinExistence type="evidence at protein level"/>
<evidence type="ECO:0000250" key="1">
    <source>
        <dbReference type="UniProtKB" id="Q3TFD2"/>
    </source>
</evidence>
<evidence type="ECO:0000250" key="2">
    <source>
        <dbReference type="UniProtKB" id="Q7L5N7"/>
    </source>
</evidence>
<evidence type="ECO:0000250" key="3">
    <source>
        <dbReference type="UniProtKB" id="Q8NF37"/>
    </source>
</evidence>
<evidence type="ECO:0000255" key="4"/>
<evidence type="ECO:0000255" key="5">
    <source>
        <dbReference type="PROSITE-ProRule" id="PRU00448"/>
    </source>
</evidence>
<evidence type="ECO:0000256" key="6">
    <source>
        <dbReference type="SAM" id="MobiDB-lite"/>
    </source>
</evidence>
<evidence type="ECO:0000269" key="7">
    <source>
    </source>
</evidence>
<evidence type="ECO:0000269" key="8">
    <source>
    </source>
</evidence>
<evidence type="ECO:0000269" key="9">
    <source>
    </source>
</evidence>
<evidence type="ECO:0000303" key="10">
    <source>
    </source>
</evidence>
<evidence type="ECO:0000305" key="11"/>
<evidence type="ECO:0000305" key="12">
    <source>
    </source>
</evidence>
<evidence type="ECO:0000305" key="13">
    <source>
    </source>
</evidence>
<keyword id="KW-0012">Acyltransferase</keyword>
<keyword id="KW-0025">Alternative splicing</keyword>
<keyword id="KW-0106">Calcium</keyword>
<keyword id="KW-1003">Cell membrane</keyword>
<keyword id="KW-0256">Endoplasmic reticulum</keyword>
<keyword id="KW-0333">Golgi apparatus</keyword>
<keyword id="KW-0444">Lipid biosynthesis</keyword>
<keyword id="KW-0551">Lipid droplet</keyword>
<keyword id="KW-0443">Lipid metabolism</keyword>
<keyword id="KW-0472">Membrane</keyword>
<keyword id="KW-0479">Metal-binding</keyword>
<keyword id="KW-0594">Phospholipid biosynthesis</keyword>
<keyword id="KW-1208">Phospholipid metabolism</keyword>
<keyword id="KW-1185">Reference proteome</keyword>
<keyword id="KW-0677">Repeat</keyword>
<keyword id="KW-0735">Signal-anchor</keyword>
<keyword id="KW-0808">Transferase</keyword>
<keyword id="KW-0812">Transmembrane</keyword>
<keyword id="KW-1133">Transmembrane helix</keyword>
<accession>Q8BYI6</accession>
<accession>A3KBM0</accession>
<accession>A9Q1G2</accession>
<accession>A9Q1G3</accession>
<comment type="function">
    <text evidence="3 7 8 9">Exhibits both acyltransferase and acetyltransferase activities (PubMed:17182612, PubMed:18156367, PubMed:18285344). Activity is calcium-dependent (PubMed:17182612). Catalyzes the conversion of lysophosphatidylcholine (1-acyl-sn-glycero-3-phosphocholine or LPC) into phosphatidylcholine (1,2-diacyl-sn-glycero-3-phosphocholine or PC) (PubMed:17182612, PubMed:18156367). Catalyzes the conversion 1-acyl-sn-glycerol-3-phosphate (lysophosphatidic acid or LPA) into 1,2-diacyl-sn-glycerol-3-phosphate (phosphatidic acid or PA) by incorporating an acyl moiety at the sn-2 position of the glycerol backbone (By similarity). Involved in platelet-activating factor (PAF) biosynthesis by catalyzing the conversion of the PAF precursor, 1-O-alkyl-sn-glycero-3-phosphocholine (lyso-PAF) into 1-O-alkyl-2-acetyl-sn-glycero-3-phosphocholine (PAF) (PubMed:17182612, PubMed:18285344). Also converts lyso-PAF to 1-O-alkyl-2-acyl-sn-glycero-3-phosphocholine (PC), a major component of cell membranes and a PAF precursor (PubMed:17182612). Under resting conditions, acyltransferase activity is preferred (PubMed:17182612). Upon acute inflammatory stimulus, acetyltransferase activity is enhanced and PAF synthesis increases (PubMed:17182612). Involved in the regulation of lipid droplet number and size (By similarity).</text>
</comment>
<comment type="catalytic activity">
    <reaction evidence="7 8">
        <text>a 1-acyl-sn-glycero-3-phosphocholine + an acyl-CoA = a 1,2-diacyl-sn-glycero-3-phosphocholine + CoA</text>
        <dbReference type="Rhea" id="RHEA:12937"/>
        <dbReference type="ChEBI" id="CHEBI:57287"/>
        <dbReference type="ChEBI" id="CHEBI:57643"/>
        <dbReference type="ChEBI" id="CHEBI:58168"/>
        <dbReference type="ChEBI" id="CHEBI:58342"/>
        <dbReference type="EC" id="2.3.1.23"/>
    </reaction>
</comment>
<comment type="catalytic activity">
    <reaction evidence="7 9">
        <text>a 1-O-alkyl-sn-glycero-3-phosphocholine + acetyl-CoA = a 1-O-alkyl-2-acetyl-sn-glycero-3-phosphocholine + CoA</text>
        <dbReference type="Rhea" id="RHEA:18461"/>
        <dbReference type="ChEBI" id="CHEBI:30909"/>
        <dbReference type="ChEBI" id="CHEBI:36707"/>
        <dbReference type="ChEBI" id="CHEBI:57287"/>
        <dbReference type="ChEBI" id="CHEBI:57288"/>
        <dbReference type="EC" id="2.3.1.67"/>
    </reaction>
</comment>
<comment type="catalytic activity">
    <reaction evidence="2">
        <text>a 1-acyl-sn-glycero-3-phosphate + an acyl-CoA = a 1,2-diacyl-sn-glycero-3-phosphate + CoA</text>
        <dbReference type="Rhea" id="RHEA:19709"/>
        <dbReference type="ChEBI" id="CHEBI:57287"/>
        <dbReference type="ChEBI" id="CHEBI:57970"/>
        <dbReference type="ChEBI" id="CHEBI:58342"/>
        <dbReference type="ChEBI" id="CHEBI:58608"/>
        <dbReference type="EC" id="2.3.1.51"/>
    </reaction>
</comment>
<comment type="catalytic activity">
    <reaction evidence="7">
        <text>a 1-O-(1Z-alkenyl)-sn-glycero-3-phosphocholine + an acyl-CoA = a 1-O-(1Z-alkenyl)-2-acyl-sn-glycero-3-phosphocholine + CoA</text>
        <dbReference type="Rhea" id="RHEA:10344"/>
        <dbReference type="ChEBI" id="CHEBI:57287"/>
        <dbReference type="ChEBI" id="CHEBI:58342"/>
        <dbReference type="ChEBI" id="CHEBI:77286"/>
        <dbReference type="ChEBI" id="CHEBI:77287"/>
        <dbReference type="EC" id="2.3.1.25"/>
    </reaction>
</comment>
<comment type="catalytic activity">
    <reaction evidence="7">
        <text>1-O-octadecyl-sn-glycero-3-phosphocholine + acetyl-CoA = 1-O-octadecyl-2-acetyl-sn-glycero-3-phosphocholine + CoA</text>
        <dbReference type="Rhea" id="RHEA:37699"/>
        <dbReference type="ChEBI" id="CHEBI:52450"/>
        <dbReference type="ChEBI" id="CHEBI:57287"/>
        <dbReference type="ChEBI" id="CHEBI:57288"/>
        <dbReference type="ChEBI" id="CHEBI:75216"/>
    </reaction>
    <physiologicalReaction direction="left-to-right" evidence="12">
        <dbReference type="Rhea" id="RHEA:37700"/>
    </physiologicalReaction>
</comment>
<comment type="catalytic activity">
    <reaction evidence="7">
        <text>1-hexadecanoyl-sn-glycero-3-phosphocholine + acetyl-CoA = 1-hexadecanoyl-2-acetyl-sn-glycero-3-phosphocholine + CoA</text>
        <dbReference type="Rhea" id="RHEA:37703"/>
        <dbReference type="ChEBI" id="CHEBI:57287"/>
        <dbReference type="ChEBI" id="CHEBI:57288"/>
        <dbReference type="ChEBI" id="CHEBI:72998"/>
        <dbReference type="ChEBI" id="CHEBI:75219"/>
    </reaction>
    <physiologicalReaction direction="left-to-right" evidence="12">
        <dbReference type="Rhea" id="RHEA:37704"/>
    </physiologicalReaction>
</comment>
<comment type="catalytic activity">
    <reaction evidence="7">
        <text>1-octadecanoyl-sn-glycero-3-phosphocholine + acetyl-CoA = 1-octadecanoyl-2-acetyl-sn-glycero-3-phosphocholine + CoA</text>
        <dbReference type="Rhea" id="RHEA:37707"/>
        <dbReference type="ChEBI" id="CHEBI:57287"/>
        <dbReference type="ChEBI" id="CHEBI:57288"/>
        <dbReference type="ChEBI" id="CHEBI:73858"/>
        <dbReference type="ChEBI" id="CHEBI:75220"/>
    </reaction>
    <physiologicalReaction direction="left-to-right" evidence="12">
        <dbReference type="Rhea" id="RHEA:37708"/>
    </physiologicalReaction>
</comment>
<comment type="catalytic activity">
    <reaction evidence="7">
        <text>a 1-O-(1Z-alkenyl)-sn-glycero-3-phosphocholine + acetyl-CoA = 1-O-(1Z)-alkenyl-2-acetyl-sn-glycero-3-phosphocholine + CoA</text>
        <dbReference type="Rhea" id="RHEA:37711"/>
        <dbReference type="ChEBI" id="CHEBI:57287"/>
        <dbReference type="ChEBI" id="CHEBI:57288"/>
        <dbReference type="ChEBI" id="CHEBI:77287"/>
        <dbReference type="ChEBI" id="CHEBI:78566"/>
    </reaction>
    <physiologicalReaction direction="left-to-right" evidence="12">
        <dbReference type="Rhea" id="RHEA:37712"/>
    </physiologicalReaction>
</comment>
<comment type="catalytic activity">
    <reaction evidence="7 9">
        <text>1-O-hexadecyl-sn-glycero-3-phosphocholine + acetyl-CoA = 1-O-hexadecyl-2-acetyl-sn-glycero-3-phosphocholine + CoA</text>
        <dbReference type="Rhea" id="RHEA:37719"/>
        <dbReference type="ChEBI" id="CHEBI:44811"/>
        <dbReference type="ChEBI" id="CHEBI:57287"/>
        <dbReference type="ChEBI" id="CHEBI:57288"/>
        <dbReference type="ChEBI" id="CHEBI:64496"/>
    </reaction>
    <physiologicalReaction direction="left-to-right" evidence="12">
        <dbReference type="Rhea" id="RHEA:37720"/>
    </physiologicalReaction>
</comment>
<comment type="catalytic activity">
    <reaction evidence="7">
        <text>1-O-octadecyl-sn-glycero-3-phosphocholine + (5Z,8Z,11Z,14Z)-eicosatetraenoyl-CoA = 1-O-octadecyl-2-(5Z,8Z,11Z,14Z)-eicosatetraenoyl-sn-glycero-3-phosphocholine + CoA</text>
        <dbReference type="Rhea" id="RHEA:37747"/>
        <dbReference type="ChEBI" id="CHEBI:57287"/>
        <dbReference type="ChEBI" id="CHEBI:57368"/>
        <dbReference type="ChEBI" id="CHEBI:75216"/>
        <dbReference type="ChEBI" id="CHEBI:75245"/>
    </reaction>
    <physiologicalReaction direction="left-to-right" evidence="12">
        <dbReference type="Rhea" id="RHEA:37748"/>
    </physiologicalReaction>
</comment>
<comment type="catalytic activity">
    <reaction evidence="2">
        <text>1-hexadecanoyl-sn-glycero-3-phosphate + (9Z)-octadecenoyl-CoA = 1-hexadecanoyl-2-(9Z-octadecenoyl)-sn-glycero-3-phosphate + CoA</text>
        <dbReference type="Rhea" id="RHEA:33187"/>
        <dbReference type="ChEBI" id="CHEBI:57287"/>
        <dbReference type="ChEBI" id="CHEBI:57387"/>
        <dbReference type="ChEBI" id="CHEBI:57518"/>
        <dbReference type="ChEBI" id="CHEBI:64839"/>
    </reaction>
    <physiologicalReaction direction="left-to-right" evidence="2">
        <dbReference type="Rhea" id="RHEA:33188"/>
    </physiologicalReaction>
</comment>
<comment type="catalytic activity">
    <reaction evidence="2">
        <text>1-(9Z-octadecenoyl)-sn-glycero-3-phosphate + (9Z)-octadecenoyl-CoA = 1,2-di-(9Z-octadecenoyl)-sn-glycero-3-phosphate + CoA</text>
        <dbReference type="Rhea" id="RHEA:37131"/>
        <dbReference type="ChEBI" id="CHEBI:57287"/>
        <dbReference type="ChEBI" id="CHEBI:57387"/>
        <dbReference type="ChEBI" id="CHEBI:74544"/>
        <dbReference type="ChEBI" id="CHEBI:74546"/>
    </reaction>
    <physiologicalReaction direction="left-to-right" evidence="2">
        <dbReference type="Rhea" id="RHEA:37132"/>
    </physiologicalReaction>
</comment>
<comment type="catalytic activity">
    <reaction evidence="2">
        <text>1-(9Z-octadecenoyl)-sn-glycero-3-phosphate + hexadecanoyl-CoA = 1-(9Z)-octadecenoyl-2-hexadecanoyl-sn-glycero-3-phosphate + CoA</text>
        <dbReference type="Rhea" id="RHEA:37143"/>
        <dbReference type="ChEBI" id="CHEBI:57287"/>
        <dbReference type="ChEBI" id="CHEBI:57379"/>
        <dbReference type="ChEBI" id="CHEBI:74544"/>
        <dbReference type="ChEBI" id="CHEBI:74551"/>
    </reaction>
    <physiologicalReaction direction="left-to-right" evidence="2">
        <dbReference type="Rhea" id="RHEA:37144"/>
    </physiologicalReaction>
</comment>
<comment type="catalytic activity">
    <reaction evidence="2">
        <text>1-heptadecanoyl-sn-glycero-3-phosphate + (9Z)-octadecenoyl-CoA = 1-heptadecanoyl-2-(9Z)-octadecenoyl-sn-glycero-3-phosphate + CoA</text>
        <dbReference type="Rhea" id="RHEA:37151"/>
        <dbReference type="ChEBI" id="CHEBI:57287"/>
        <dbReference type="ChEBI" id="CHEBI:57387"/>
        <dbReference type="ChEBI" id="CHEBI:74554"/>
        <dbReference type="ChEBI" id="CHEBI:74556"/>
    </reaction>
    <physiologicalReaction direction="left-to-right" evidence="2">
        <dbReference type="Rhea" id="RHEA:37152"/>
    </physiologicalReaction>
</comment>
<comment type="catalytic activity">
    <reaction evidence="2">
        <text>1-octadecanoyl-sn-glycero-3-phosphate + (9Z)-octadecenoyl-CoA = 1-octadecanoyl-2-(9Z-octadecenoyl)-sn-glycero-3-phosphate + CoA</text>
        <dbReference type="Rhea" id="RHEA:37163"/>
        <dbReference type="ChEBI" id="CHEBI:57287"/>
        <dbReference type="ChEBI" id="CHEBI:57387"/>
        <dbReference type="ChEBI" id="CHEBI:74560"/>
        <dbReference type="ChEBI" id="CHEBI:74565"/>
    </reaction>
    <physiologicalReaction direction="left-to-right" evidence="2">
        <dbReference type="Rhea" id="RHEA:37164"/>
    </physiologicalReaction>
</comment>
<comment type="catalytic activity">
    <reaction evidence="2">
        <text>heptadecanoyl-CoA + 1-(9Z-octadecenoyl)-sn-glycero-3-phosphate = 1-(9Z)-octadecenoyl-2-heptadecanoyl-sn-glycero-3-phosphate + CoA</text>
        <dbReference type="Rhea" id="RHEA:37155"/>
        <dbReference type="ChEBI" id="CHEBI:57287"/>
        <dbReference type="ChEBI" id="CHEBI:74307"/>
        <dbReference type="ChEBI" id="CHEBI:74544"/>
        <dbReference type="ChEBI" id="CHEBI:74558"/>
    </reaction>
    <physiologicalReaction direction="left-to-right" evidence="2">
        <dbReference type="Rhea" id="RHEA:37156"/>
    </physiologicalReaction>
</comment>
<comment type="catalytic activity">
    <reaction evidence="2">
        <text>1-(9Z-octadecenoyl)-sn-glycero-3-phosphate + (9Z,12Z)-octadecadienoyl-CoA = 1-(9Z)-octadecenoyl-2-(9Z,12Z)-octadecadienoyl-sn-glycero-3-phosphate + CoA</text>
        <dbReference type="Rhea" id="RHEA:37159"/>
        <dbReference type="ChEBI" id="CHEBI:57287"/>
        <dbReference type="ChEBI" id="CHEBI:57383"/>
        <dbReference type="ChEBI" id="CHEBI:74544"/>
        <dbReference type="ChEBI" id="CHEBI:74563"/>
    </reaction>
    <physiologicalReaction direction="left-to-right" evidence="2">
        <dbReference type="Rhea" id="RHEA:37160"/>
    </physiologicalReaction>
</comment>
<comment type="catalytic activity">
    <reaction evidence="2">
        <text>1-(9Z-octadecenoyl)-sn-glycero-3-phosphate + tetradecanoyl-CoA = 1-(9Z)-octadecenoyl-2-tetradecanoyl-sn-glycero-3-phosphate + CoA</text>
        <dbReference type="Rhea" id="RHEA:37171"/>
        <dbReference type="ChEBI" id="CHEBI:57287"/>
        <dbReference type="ChEBI" id="CHEBI:57385"/>
        <dbReference type="ChEBI" id="CHEBI:74544"/>
        <dbReference type="ChEBI" id="CHEBI:74579"/>
    </reaction>
    <physiologicalReaction direction="left-to-right" evidence="2">
        <dbReference type="Rhea" id="RHEA:37172"/>
    </physiologicalReaction>
</comment>
<comment type="catalytic activity">
    <reaction evidence="2">
        <text>pentadecanoyl-CoA + 1-(9Z-octadecenoyl)-sn-glycero-3-phosphate = 1-(9Z)-octadecenoyl-2-pentadecanoyl-sn-glycero-3-phosphate + CoA</text>
        <dbReference type="Rhea" id="RHEA:37175"/>
        <dbReference type="ChEBI" id="CHEBI:57287"/>
        <dbReference type="ChEBI" id="CHEBI:74309"/>
        <dbReference type="ChEBI" id="CHEBI:74544"/>
        <dbReference type="ChEBI" id="CHEBI:74578"/>
    </reaction>
    <physiologicalReaction direction="left-to-right" evidence="2">
        <dbReference type="Rhea" id="RHEA:37176"/>
    </physiologicalReaction>
</comment>
<comment type="catalytic activity">
    <reaction evidence="2">
        <text>nonadecanoyl-CoA + 1-(9Z-octadecenoyl)-sn-glycero-3-phosphate = 1-(9Z)-octadecenoyl-2-nonadecanoyl-sn-glycero-3-phosphate + CoA</text>
        <dbReference type="Rhea" id="RHEA:37595"/>
        <dbReference type="ChEBI" id="CHEBI:57287"/>
        <dbReference type="ChEBI" id="CHEBI:74544"/>
        <dbReference type="ChEBI" id="CHEBI:75104"/>
        <dbReference type="ChEBI" id="CHEBI:75105"/>
    </reaction>
    <physiologicalReaction direction="left-to-right" evidence="2">
        <dbReference type="Rhea" id="RHEA:37596"/>
    </physiologicalReaction>
</comment>
<comment type="catalytic activity">
    <reaction evidence="2">
        <text>1-hexadecanoyl-sn-glycero-3-phosphocholine + (9Z)-octadecenoyl-CoA = 1-hexadecanoyl-2-(9Z-octadecenoyl)-sn-glycero-3-phosphocholine + CoA</text>
        <dbReference type="Rhea" id="RHEA:35991"/>
        <dbReference type="ChEBI" id="CHEBI:57287"/>
        <dbReference type="ChEBI" id="CHEBI:57387"/>
        <dbReference type="ChEBI" id="CHEBI:72998"/>
        <dbReference type="ChEBI" id="CHEBI:73001"/>
    </reaction>
    <physiologicalReaction direction="left-to-right" evidence="2">
        <dbReference type="Rhea" id="RHEA:35992"/>
    </physiologicalReaction>
</comment>
<comment type="activity regulation">
    <text evidence="7">Acetyltransferase activity is increased following acute inflammatory stimulation by lipopolysaccharide (LPS). Acyltransferase activity is unchanged.</text>
</comment>
<comment type="biophysicochemical properties">
    <kinetics>
        <KM evidence="7">50.4 uM for acetyl-CoA</KM>
        <KM evidence="7">21.1 uM for arachidonoyl-CoA</KM>
    </kinetics>
    <temperatureDependence>
        <text evidence="7">Optimum temperature is 7.4 degrees Celsius.</text>
    </temperatureDependence>
</comment>
<comment type="pathway">
    <text>Lipid metabolism; phospholipid metabolism.</text>
</comment>
<comment type="subcellular location">
    <subcellularLocation>
        <location evidence="7">Endoplasmic reticulum membrane</location>
        <topology evidence="2">Single-pass type II membrane protein</topology>
    </subcellularLocation>
    <subcellularLocation>
        <location evidence="7">Golgi apparatus membrane</location>
        <topology evidence="2">Single-pass type II membrane protein</topology>
    </subcellularLocation>
    <subcellularLocation>
        <location evidence="13">Cell membrane</location>
        <topology evidence="2">Single-pass type II membrane protein</topology>
    </subcellularLocation>
    <subcellularLocation>
        <location evidence="2">Lipid droplet</location>
    </subcellularLocation>
</comment>
<comment type="alternative products">
    <event type="alternative splicing"/>
    <isoform>
        <id>Q8BYI6-1</id>
        <name>1</name>
        <name>a</name>
        <name>Aytl1_v1</name>
        <sequence type="displayed"/>
    </isoform>
    <isoform>
        <id>Q8BYI6-2</id>
        <name>2</name>
        <name>b</name>
        <name>Aytl1_v2</name>
        <sequence type="described" ref="VSP_037079"/>
    </isoform>
    <isoform>
        <id>Q8BYI6-3</id>
        <name>3</name>
        <name>c</name>
        <name>Aytl1_v3</name>
        <sequence type="described" ref="VSP_037080 VSP_037081"/>
    </isoform>
</comment>
<comment type="tissue specificity">
    <text evidence="7 8">Highest expression is found in resident macrophages and casein-induced neutrophils followed by skin, colon, spleen and thioglycollate-induced macrophages. Detected in erythroleukemic cells but not in reticulocytes.</text>
</comment>
<comment type="induction">
    <text evidence="7">By inflammatory stimulation by LPS and by ODN1826, a TLR9 ligand, but not by poly(I:C), a TLR3 ligand.</text>
</comment>
<comment type="domain">
    <text evidence="1">The HXXXXD motif is essential for acyltransferase activity.</text>
</comment>
<comment type="similarity">
    <text evidence="11">Belongs to the 1-acyl-sn-glycerol-3-phosphate acyltransferase family.</text>
</comment>
<gene>
    <name type="primary">Lpcat2</name>
    <name type="synonym">Aytl1</name>
    <name type="synonym">Aytl1a</name>
    <name type="synonym">Lpcat2a</name>
</gene>
<feature type="chain" id="PRO_0000247059" description="Lysophosphatidylcholine acyltransferase 2">
    <location>
        <begin position="1"/>
        <end position="544"/>
    </location>
</feature>
<feature type="topological domain" description="Cytoplasmic" evidence="4">
    <location>
        <begin position="1"/>
        <end position="58"/>
    </location>
</feature>
<feature type="transmembrane region" description="Helical; Signal-anchor for type II membrane protein" evidence="4">
    <location>
        <begin position="59"/>
        <end position="79"/>
    </location>
</feature>
<feature type="topological domain" description="Lumenal" evidence="4">
    <location>
        <begin position="80"/>
        <end position="544"/>
    </location>
</feature>
<feature type="domain" description="EF-hand 1" evidence="5">
    <location>
        <begin position="391"/>
        <end position="426"/>
    </location>
</feature>
<feature type="domain" description="EF-hand 2" evidence="5">
    <location>
        <begin position="428"/>
        <end position="463"/>
    </location>
</feature>
<feature type="region of interest" description="Disordered" evidence="6">
    <location>
        <begin position="520"/>
        <end position="544"/>
    </location>
</feature>
<feature type="short sequence motif" description="HXXXXD motif" evidence="1">
    <location>
        <begin position="146"/>
        <end position="151"/>
    </location>
</feature>
<feature type="short sequence motif" description="EGTC motif">
    <location>
        <begin position="220"/>
        <end position="223"/>
    </location>
</feature>
<feature type="compositionally biased region" description="Polar residues" evidence="6">
    <location>
        <begin position="520"/>
        <end position="532"/>
    </location>
</feature>
<feature type="binding site" evidence="5">
    <location>
        <position position="404"/>
    </location>
    <ligand>
        <name>Ca(2+)</name>
        <dbReference type="ChEBI" id="CHEBI:29108"/>
        <label>1</label>
    </ligand>
</feature>
<feature type="binding site" evidence="5">
    <location>
        <position position="406"/>
    </location>
    <ligand>
        <name>Ca(2+)</name>
        <dbReference type="ChEBI" id="CHEBI:29108"/>
        <label>1</label>
    </ligand>
</feature>
<feature type="binding site" evidence="5">
    <location>
        <position position="408"/>
    </location>
    <ligand>
        <name>Ca(2+)</name>
        <dbReference type="ChEBI" id="CHEBI:29108"/>
        <label>1</label>
    </ligand>
</feature>
<feature type="binding site" evidence="5">
    <location>
        <position position="410"/>
    </location>
    <ligand>
        <name>Ca(2+)</name>
        <dbReference type="ChEBI" id="CHEBI:29108"/>
        <label>1</label>
    </ligand>
</feature>
<feature type="binding site" evidence="5">
    <location>
        <position position="415"/>
    </location>
    <ligand>
        <name>Ca(2+)</name>
        <dbReference type="ChEBI" id="CHEBI:29108"/>
        <label>1</label>
    </ligand>
</feature>
<feature type="binding site" evidence="5">
    <location>
        <position position="441"/>
    </location>
    <ligand>
        <name>Ca(2+)</name>
        <dbReference type="ChEBI" id="CHEBI:29108"/>
        <label>2</label>
    </ligand>
</feature>
<feature type="binding site" evidence="5">
    <location>
        <position position="443"/>
    </location>
    <ligand>
        <name>Ca(2+)</name>
        <dbReference type="ChEBI" id="CHEBI:29108"/>
        <label>2</label>
    </ligand>
</feature>
<feature type="binding site" evidence="5">
    <location>
        <position position="445"/>
    </location>
    <ligand>
        <name>Ca(2+)</name>
        <dbReference type="ChEBI" id="CHEBI:29108"/>
        <label>2</label>
    </ligand>
</feature>
<feature type="binding site" evidence="5">
    <location>
        <position position="447"/>
    </location>
    <ligand>
        <name>Ca(2+)</name>
        <dbReference type="ChEBI" id="CHEBI:29108"/>
        <label>2</label>
    </ligand>
</feature>
<feature type="binding site" evidence="5">
    <location>
        <position position="452"/>
    </location>
    <ligand>
        <name>Ca(2+)</name>
        <dbReference type="ChEBI" id="CHEBI:29108"/>
        <label>2</label>
    </ligand>
</feature>
<feature type="splice variant" id="VSP_037079" description="In isoform 2." evidence="10">
    <location>
        <begin position="215"/>
        <end position="254"/>
    </location>
</feature>
<feature type="splice variant" id="VSP_037080" description="In isoform 3." evidence="10">
    <original>ILVFPEGTCTNRSCLITFKPGA</original>
    <variation>EPSSQEFQCSPSSSDTQTSWIL</variation>
    <location>
        <begin position="215"/>
        <end position="236"/>
    </location>
</feature>
<feature type="splice variant" id="VSP_037081" description="In isoform 3." evidence="10">
    <location>
        <begin position="237"/>
        <end position="544"/>
    </location>
</feature>
<organism>
    <name type="scientific">Mus musculus</name>
    <name type="common">Mouse</name>
    <dbReference type="NCBI Taxonomy" id="10090"/>
    <lineage>
        <taxon>Eukaryota</taxon>
        <taxon>Metazoa</taxon>
        <taxon>Chordata</taxon>
        <taxon>Craniata</taxon>
        <taxon>Vertebrata</taxon>
        <taxon>Euteleostomi</taxon>
        <taxon>Mammalia</taxon>
        <taxon>Eutheria</taxon>
        <taxon>Euarchontoglires</taxon>
        <taxon>Glires</taxon>
        <taxon>Rodentia</taxon>
        <taxon>Myomorpha</taxon>
        <taxon>Muroidea</taxon>
        <taxon>Muridae</taxon>
        <taxon>Murinae</taxon>
        <taxon>Mus</taxon>
        <taxon>Mus</taxon>
    </lineage>
</organism>
<reference key="1">
    <citation type="journal article" date="2007" name="J. Biol. Chem.">
        <title>A single enzyme catalyzes both platelet-activating factor production and membrane biogenesis of inflammatory cells. Cloning and characterization of acetyl-CoA:lyso-PAF acetyltransferase.</title>
        <authorList>
            <person name="Shindou H."/>
            <person name="Hishikawa D."/>
            <person name="Nakanishi H."/>
            <person name="Harayama T."/>
            <person name="Ishii S."/>
            <person name="Taguchi R."/>
            <person name="Shimizu T."/>
        </authorList>
    </citation>
    <scope>NUCLEOTIDE SEQUENCE [MRNA] (ISOFORM 1)</scope>
    <scope>FUNCTION</scope>
    <scope>CATALYTIC ACTIVITY</scope>
    <scope>ACTIVITY REGULATION</scope>
    <scope>BIOPHYSICOCHEMICAL PROPERTIES</scope>
    <scope>SUBCELLULAR LOCATION</scope>
    <scope>TISSUE SPECIFICITY</scope>
    <scope>INDUCTION</scope>
</reference>
<reference key="2">
    <citation type="journal article" date="2005" name="Science">
        <title>The transcriptional landscape of the mammalian genome.</title>
        <authorList>
            <person name="Carninci P."/>
            <person name="Kasukawa T."/>
            <person name="Katayama S."/>
            <person name="Gough J."/>
            <person name="Frith M.C."/>
            <person name="Maeda N."/>
            <person name="Oyama R."/>
            <person name="Ravasi T."/>
            <person name="Lenhard B."/>
            <person name="Wells C."/>
            <person name="Kodzius R."/>
            <person name="Shimokawa K."/>
            <person name="Bajic V.B."/>
            <person name="Brenner S.E."/>
            <person name="Batalov S."/>
            <person name="Forrest A.R."/>
            <person name="Zavolan M."/>
            <person name="Davis M.J."/>
            <person name="Wilming L.G."/>
            <person name="Aidinis V."/>
            <person name="Allen J.E."/>
            <person name="Ambesi-Impiombato A."/>
            <person name="Apweiler R."/>
            <person name="Aturaliya R.N."/>
            <person name="Bailey T.L."/>
            <person name="Bansal M."/>
            <person name="Baxter L."/>
            <person name="Beisel K.W."/>
            <person name="Bersano T."/>
            <person name="Bono H."/>
            <person name="Chalk A.M."/>
            <person name="Chiu K.P."/>
            <person name="Choudhary V."/>
            <person name="Christoffels A."/>
            <person name="Clutterbuck D.R."/>
            <person name="Crowe M.L."/>
            <person name="Dalla E."/>
            <person name="Dalrymple B.P."/>
            <person name="de Bono B."/>
            <person name="Della Gatta G."/>
            <person name="di Bernardo D."/>
            <person name="Down T."/>
            <person name="Engstrom P."/>
            <person name="Fagiolini M."/>
            <person name="Faulkner G."/>
            <person name="Fletcher C.F."/>
            <person name="Fukushima T."/>
            <person name="Furuno M."/>
            <person name="Futaki S."/>
            <person name="Gariboldi M."/>
            <person name="Georgii-Hemming P."/>
            <person name="Gingeras T.R."/>
            <person name="Gojobori T."/>
            <person name="Green R.E."/>
            <person name="Gustincich S."/>
            <person name="Harbers M."/>
            <person name="Hayashi Y."/>
            <person name="Hensch T.K."/>
            <person name="Hirokawa N."/>
            <person name="Hill D."/>
            <person name="Huminiecki L."/>
            <person name="Iacono M."/>
            <person name="Ikeo K."/>
            <person name="Iwama A."/>
            <person name="Ishikawa T."/>
            <person name="Jakt M."/>
            <person name="Kanapin A."/>
            <person name="Katoh M."/>
            <person name="Kawasawa Y."/>
            <person name="Kelso J."/>
            <person name="Kitamura H."/>
            <person name="Kitano H."/>
            <person name="Kollias G."/>
            <person name="Krishnan S.P."/>
            <person name="Kruger A."/>
            <person name="Kummerfeld S.K."/>
            <person name="Kurochkin I.V."/>
            <person name="Lareau L.F."/>
            <person name="Lazarevic D."/>
            <person name="Lipovich L."/>
            <person name="Liu J."/>
            <person name="Liuni S."/>
            <person name="McWilliam S."/>
            <person name="Madan Babu M."/>
            <person name="Madera M."/>
            <person name="Marchionni L."/>
            <person name="Matsuda H."/>
            <person name="Matsuzawa S."/>
            <person name="Miki H."/>
            <person name="Mignone F."/>
            <person name="Miyake S."/>
            <person name="Morris K."/>
            <person name="Mottagui-Tabar S."/>
            <person name="Mulder N."/>
            <person name="Nakano N."/>
            <person name="Nakauchi H."/>
            <person name="Ng P."/>
            <person name="Nilsson R."/>
            <person name="Nishiguchi S."/>
            <person name="Nishikawa S."/>
            <person name="Nori F."/>
            <person name="Ohara O."/>
            <person name="Okazaki Y."/>
            <person name="Orlando V."/>
            <person name="Pang K.C."/>
            <person name="Pavan W.J."/>
            <person name="Pavesi G."/>
            <person name="Pesole G."/>
            <person name="Petrovsky N."/>
            <person name="Piazza S."/>
            <person name="Reed J."/>
            <person name="Reid J.F."/>
            <person name="Ring B.Z."/>
            <person name="Ringwald M."/>
            <person name="Rost B."/>
            <person name="Ruan Y."/>
            <person name="Salzberg S.L."/>
            <person name="Sandelin A."/>
            <person name="Schneider C."/>
            <person name="Schoenbach C."/>
            <person name="Sekiguchi K."/>
            <person name="Semple C.A."/>
            <person name="Seno S."/>
            <person name="Sessa L."/>
            <person name="Sheng Y."/>
            <person name="Shibata Y."/>
            <person name="Shimada H."/>
            <person name="Shimada K."/>
            <person name="Silva D."/>
            <person name="Sinclair B."/>
            <person name="Sperling S."/>
            <person name="Stupka E."/>
            <person name="Sugiura K."/>
            <person name="Sultana R."/>
            <person name="Takenaka Y."/>
            <person name="Taki K."/>
            <person name="Tammoja K."/>
            <person name="Tan S.L."/>
            <person name="Tang S."/>
            <person name="Taylor M.S."/>
            <person name="Tegner J."/>
            <person name="Teichmann S.A."/>
            <person name="Ueda H.R."/>
            <person name="van Nimwegen E."/>
            <person name="Verardo R."/>
            <person name="Wei C.L."/>
            <person name="Yagi K."/>
            <person name="Yamanishi H."/>
            <person name="Zabarovsky E."/>
            <person name="Zhu S."/>
            <person name="Zimmer A."/>
            <person name="Hide W."/>
            <person name="Bult C."/>
            <person name="Grimmond S.M."/>
            <person name="Teasdale R.D."/>
            <person name="Liu E.T."/>
            <person name="Brusic V."/>
            <person name="Quackenbush J."/>
            <person name="Wahlestedt C."/>
            <person name="Mattick J.S."/>
            <person name="Hume D.A."/>
            <person name="Kai C."/>
            <person name="Sasaki D."/>
            <person name="Tomaru Y."/>
            <person name="Fukuda S."/>
            <person name="Kanamori-Katayama M."/>
            <person name="Suzuki M."/>
            <person name="Aoki J."/>
            <person name="Arakawa T."/>
            <person name="Iida J."/>
            <person name="Imamura K."/>
            <person name="Itoh M."/>
            <person name="Kato T."/>
            <person name="Kawaji H."/>
            <person name="Kawagashira N."/>
            <person name="Kawashima T."/>
            <person name="Kojima M."/>
            <person name="Kondo S."/>
            <person name="Konno H."/>
            <person name="Nakano K."/>
            <person name="Ninomiya N."/>
            <person name="Nishio T."/>
            <person name="Okada M."/>
            <person name="Plessy C."/>
            <person name="Shibata K."/>
            <person name="Shiraki T."/>
            <person name="Suzuki S."/>
            <person name="Tagami M."/>
            <person name="Waki K."/>
            <person name="Watahiki A."/>
            <person name="Okamura-Oho Y."/>
            <person name="Suzuki H."/>
            <person name="Kawai J."/>
            <person name="Hayashizaki Y."/>
        </authorList>
    </citation>
    <scope>NUCLEOTIDE SEQUENCE [LARGE SCALE MRNA] (ISOFORM 1)</scope>
    <source>
        <strain>C57BL/6J</strain>
        <tissue>Spinal cord</tissue>
    </source>
</reference>
<reference key="3">
    <citation type="journal article" date="2008" name="Proc. Natl. Acad. Sci. U.S.A.">
        <title>Mammalian acyl-CoA:lysophosphatidylcholine acyltransferase enzymes.</title>
        <authorList>
            <person name="Soupene E."/>
            <person name="Fyrst H."/>
            <person name="Kuypers F.A."/>
        </authorList>
    </citation>
    <scope>NUCLEOTIDE SEQUENCE [MRNA] OF 175-299 (ISOFORM 2)</scope>
    <scope>NUCLEOTIDE SEQUENCE [MRNA] OF 175-544 (ISOFORM 3)</scope>
    <scope>FUNCTION</scope>
    <scope>CATALYTIC ACTIVITY</scope>
    <scope>SUBCELLULAR LOCATION</scope>
    <scope>TISSUE SPECIFICITY</scope>
</reference>
<reference key="4">
    <citation type="journal article" date="2008" name="J. Biol. Chem.">
        <title>Identification of a novel noninflammatory biosynthetic pathway of platelet-activating factor.</title>
        <authorList>
            <person name="Harayama T."/>
            <person name="Shindou H."/>
            <person name="Ogasawara R."/>
            <person name="Suwabe A."/>
            <person name="Shimizu T."/>
        </authorList>
    </citation>
    <scope>FUNCTION</scope>
    <scope>CATALYTIC ACTIVITY</scope>
</reference>
<sequence length="544" mass="60254">MNRCAEAAAVAATVPGSGVGDAGLRPPMVPRQASFFPPPVPNPFVQQTTISASRRLQMFLLGIILLPVRALLVGIILLLAWPFAVISTACCPEKLTHPISNWRRKITRPALTFLARAMFFSMGFTVTVKGKVASPLEAPIFVVAPHSTFFDGIACVVAGLPSLVSRNENAQTPLVGRLLRALQPVLVSRVDPDSRKNTINEIKKRATSGGEWPQILVFPEGTCTNRSCLITFKPGAFIPGVPVQPVLLRYPNKLDTVTWTWQGYTFLQLCVLTFCQLFTKVEIEFMPVQAPSEEEKNDPVLFASRIRNLMAEALEIPVTDHTYEDCRLMISAGQLTLPMEAGLVEFSKISRKLKLDWDGIRKHLDEYASIASSSKGGRIGIEEFAEYLKLPVSDVLRQLFALFDRNNDGSIDFREYVIGLAVLCNPANTEEIIQVAFKLFDVDEDGYITEEEFCTILQASLGVPDLNVSGLFREIAQRDSVSYEEFKSFALKHPEYAKIFTTYLDLQTCHVFSLPEEVQTAPSVASNKVSPESQEEGTSDKKVD</sequence>